<comment type="function">
    <text evidence="1">This protein binds to 23S rRNA in the presence of protein L20.</text>
</comment>
<comment type="subunit">
    <text evidence="1">Part of the 50S ribosomal subunit. Contacts protein L20.</text>
</comment>
<comment type="similarity">
    <text evidence="1">Belongs to the bacterial ribosomal protein bL21 family.</text>
</comment>
<accession>P78026</accession>
<reference key="1">
    <citation type="journal article" date="1996" name="Nucleic Acids Res.">
        <title>Complete sequence analysis of the genome of the bacterium Mycoplasma pneumoniae.</title>
        <authorList>
            <person name="Himmelreich R."/>
            <person name="Hilbert H."/>
            <person name="Plagens H."/>
            <person name="Pirkl E."/>
            <person name="Li B.-C."/>
            <person name="Herrmann R."/>
        </authorList>
    </citation>
    <scope>NUCLEOTIDE SEQUENCE [LARGE SCALE GENOMIC DNA]</scope>
    <source>
        <strain>ATCC 29342 / M129 / Subtype 1</strain>
    </source>
</reference>
<organism>
    <name type="scientific">Mycoplasma pneumoniae (strain ATCC 29342 / M129 / Subtype 1)</name>
    <name type="common">Mycoplasmoides pneumoniae</name>
    <dbReference type="NCBI Taxonomy" id="272634"/>
    <lineage>
        <taxon>Bacteria</taxon>
        <taxon>Bacillati</taxon>
        <taxon>Mycoplasmatota</taxon>
        <taxon>Mycoplasmoidales</taxon>
        <taxon>Mycoplasmoidaceae</taxon>
        <taxon>Mycoplasmoides</taxon>
    </lineage>
</organism>
<evidence type="ECO:0000255" key="1">
    <source>
        <dbReference type="HAMAP-Rule" id="MF_01363"/>
    </source>
</evidence>
<evidence type="ECO:0000305" key="2"/>
<evidence type="ECO:0007829" key="3">
    <source>
        <dbReference type="PDB" id="8P8B"/>
    </source>
</evidence>
<proteinExistence type="evidence at protein level"/>
<protein>
    <recommendedName>
        <fullName evidence="1">Large ribosomal subunit protein bL21</fullName>
    </recommendedName>
    <alternativeName>
        <fullName evidence="2">50S ribosomal protein L21</fullName>
    </alternativeName>
</protein>
<name>RL21_MYCPN</name>
<sequence length="100" mass="11639">MHAIVVCGSKQYLVHENDTFFVEKLEAPVGKEIQLDKVLMLDEKIGAPYLEKARVVCVVEKHGLQRKVNVIKHISQKHHLKKYGHRQPYTKLKVVRFVHD</sequence>
<keyword id="KW-0002">3D-structure</keyword>
<keyword id="KW-1185">Reference proteome</keyword>
<keyword id="KW-0687">Ribonucleoprotein</keyword>
<keyword id="KW-0689">Ribosomal protein</keyword>
<keyword id="KW-0694">RNA-binding</keyword>
<keyword id="KW-0699">rRNA-binding</keyword>
<dbReference type="EMBL" id="U00089">
    <property type="protein sequence ID" value="AAB96159.1"/>
    <property type="molecule type" value="Genomic_DNA"/>
</dbReference>
<dbReference type="PIR" id="S73837">
    <property type="entry name" value="S73837"/>
</dbReference>
<dbReference type="RefSeq" id="NP_110013.1">
    <property type="nucleotide sequence ID" value="NC_000912.1"/>
</dbReference>
<dbReference type="RefSeq" id="WP_010874681.1">
    <property type="nucleotide sequence ID" value="NZ_OU342337.1"/>
</dbReference>
<dbReference type="PDB" id="7OOD">
    <property type="method" value="EM"/>
    <property type="resolution" value="3.40 A"/>
    <property type="chains" value="q=1-100"/>
</dbReference>
<dbReference type="PDB" id="7P6Z">
    <property type="method" value="EM"/>
    <property type="resolution" value="3.50 A"/>
    <property type="chains" value="q=1-100"/>
</dbReference>
<dbReference type="PDB" id="7PAH">
    <property type="method" value="EM"/>
    <property type="resolution" value="9.50 A"/>
    <property type="chains" value="q=1-100"/>
</dbReference>
<dbReference type="PDB" id="7PAI">
    <property type="method" value="EM"/>
    <property type="resolution" value="6.70 A"/>
    <property type="chains" value="q=1-100"/>
</dbReference>
<dbReference type="PDB" id="7PAJ">
    <property type="method" value="EM"/>
    <property type="resolution" value="7.30 A"/>
    <property type="chains" value="q=1-100"/>
</dbReference>
<dbReference type="PDB" id="7PAK">
    <property type="method" value="EM"/>
    <property type="resolution" value="5.30 A"/>
    <property type="chains" value="q=1-100"/>
</dbReference>
<dbReference type="PDB" id="7PAL">
    <property type="method" value="EM"/>
    <property type="resolution" value="4.70 A"/>
    <property type="chains" value="q=1-100"/>
</dbReference>
<dbReference type="PDB" id="7PAM">
    <property type="method" value="EM"/>
    <property type="resolution" value="6.80 A"/>
    <property type="chains" value="q=1-100"/>
</dbReference>
<dbReference type="PDB" id="7PAN">
    <property type="method" value="EM"/>
    <property type="resolution" value="9.70 A"/>
    <property type="chains" value="q=1-100"/>
</dbReference>
<dbReference type="PDB" id="7PAO">
    <property type="method" value="EM"/>
    <property type="resolution" value="7.00 A"/>
    <property type="chains" value="q=1-100"/>
</dbReference>
<dbReference type="PDB" id="7PAQ">
    <property type="method" value="EM"/>
    <property type="resolution" value="8.90 A"/>
    <property type="chains" value="q=1-100"/>
</dbReference>
<dbReference type="PDB" id="7PAR">
    <property type="method" value="EM"/>
    <property type="resolution" value="8.20 A"/>
    <property type="chains" value="q=1-100"/>
</dbReference>
<dbReference type="PDB" id="7PAS">
    <property type="method" value="EM"/>
    <property type="resolution" value="16.00 A"/>
    <property type="chains" value="q=1-100"/>
</dbReference>
<dbReference type="PDB" id="7PAT">
    <property type="method" value="EM"/>
    <property type="resolution" value="9.20 A"/>
    <property type="chains" value="q=1-100"/>
</dbReference>
<dbReference type="PDB" id="7PAU">
    <property type="method" value="EM"/>
    <property type="resolution" value="8.30 A"/>
    <property type="chains" value="q=1-100"/>
</dbReference>
<dbReference type="PDB" id="7PH9">
    <property type="method" value="EM"/>
    <property type="resolution" value="8.70 A"/>
    <property type="chains" value="q=1-100"/>
</dbReference>
<dbReference type="PDB" id="7PHA">
    <property type="method" value="EM"/>
    <property type="resolution" value="8.50 A"/>
    <property type="chains" value="q=1-100"/>
</dbReference>
<dbReference type="PDB" id="7PHB">
    <property type="method" value="EM"/>
    <property type="resolution" value="4.90 A"/>
    <property type="chains" value="q=1-100"/>
</dbReference>
<dbReference type="PDB" id="7PHC">
    <property type="method" value="EM"/>
    <property type="resolution" value="9.90 A"/>
    <property type="chains" value="q=1-100"/>
</dbReference>
<dbReference type="PDB" id="7PI8">
    <property type="method" value="EM"/>
    <property type="resolution" value="8.90 A"/>
    <property type="chains" value="q=1-100"/>
</dbReference>
<dbReference type="PDB" id="7PI9">
    <property type="method" value="EM"/>
    <property type="resolution" value="6.30 A"/>
    <property type="chains" value="q=1-100"/>
</dbReference>
<dbReference type="PDB" id="7PIA">
    <property type="method" value="EM"/>
    <property type="resolution" value="13.60 A"/>
    <property type="chains" value="q=1-100"/>
</dbReference>
<dbReference type="PDB" id="7PIB">
    <property type="method" value="EM"/>
    <property type="resolution" value="4.70 A"/>
    <property type="chains" value="q=1-100"/>
</dbReference>
<dbReference type="PDB" id="7PIC">
    <property type="method" value="EM"/>
    <property type="resolution" value="9.10 A"/>
    <property type="chains" value="q=1-100"/>
</dbReference>
<dbReference type="PDB" id="7PIO">
    <property type="method" value="EM"/>
    <property type="resolution" value="9.50 A"/>
    <property type="chains" value="q=1-100"/>
</dbReference>
<dbReference type="PDB" id="7PIP">
    <property type="method" value="EM"/>
    <property type="resolution" value="9.30 A"/>
    <property type="chains" value="q=1-100"/>
</dbReference>
<dbReference type="PDB" id="7PIQ">
    <property type="method" value="EM"/>
    <property type="resolution" value="9.70 A"/>
    <property type="chains" value="q=1-100"/>
</dbReference>
<dbReference type="PDB" id="7PIR">
    <property type="method" value="EM"/>
    <property type="resolution" value="12.10 A"/>
    <property type="chains" value="q=1-100"/>
</dbReference>
<dbReference type="PDB" id="7PIS">
    <property type="method" value="EM"/>
    <property type="resolution" value="15.00 A"/>
    <property type="chains" value="q=1-100"/>
</dbReference>
<dbReference type="PDB" id="7PIT">
    <property type="method" value="EM"/>
    <property type="resolution" value="5.70 A"/>
    <property type="chains" value="q=1-100"/>
</dbReference>
<dbReference type="PDB" id="8P7X">
    <property type="method" value="EM"/>
    <property type="resolution" value="3.03 A"/>
    <property type="chains" value="q=1-100"/>
</dbReference>
<dbReference type="PDB" id="8P7Y">
    <property type="method" value="EM"/>
    <property type="resolution" value="3.70 A"/>
    <property type="chains" value="q=1-100"/>
</dbReference>
<dbReference type="PDB" id="8P8B">
    <property type="method" value="EM"/>
    <property type="resolution" value="2.90 A"/>
    <property type="chains" value="q=1-100"/>
</dbReference>
<dbReference type="PDB" id="8P8V">
    <property type="method" value="EM"/>
    <property type="resolution" value="8.70 A"/>
    <property type="chains" value="q=1-100"/>
</dbReference>
<dbReference type="PDB" id="8P8W">
    <property type="method" value="EM"/>
    <property type="resolution" value="8.70 A"/>
    <property type="chains" value="q=1-100"/>
</dbReference>
<dbReference type="PDBsum" id="7OOD"/>
<dbReference type="PDBsum" id="7P6Z"/>
<dbReference type="PDBsum" id="7PAH"/>
<dbReference type="PDBsum" id="7PAI"/>
<dbReference type="PDBsum" id="7PAJ"/>
<dbReference type="PDBsum" id="7PAK"/>
<dbReference type="PDBsum" id="7PAL"/>
<dbReference type="PDBsum" id="7PAM"/>
<dbReference type="PDBsum" id="7PAN"/>
<dbReference type="PDBsum" id="7PAO"/>
<dbReference type="PDBsum" id="7PAQ"/>
<dbReference type="PDBsum" id="7PAR"/>
<dbReference type="PDBsum" id="7PAS"/>
<dbReference type="PDBsum" id="7PAT"/>
<dbReference type="PDBsum" id="7PAU"/>
<dbReference type="PDBsum" id="7PH9"/>
<dbReference type="PDBsum" id="7PHA"/>
<dbReference type="PDBsum" id="7PHB"/>
<dbReference type="PDBsum" id="7PHC"/>
<dbReference type="PDBsum" id="7PI8"/>
<dbReference type="PDBsum" id="7PI9"/>
<dbReference type="PDBsum" id="7PIA"/>
<dbReference type="PDBsum" id="7PIB"/>
<dbReference type="PDBsum" id="7PIC"/>
<dbReference type="PDBsum" id="7PIO"/>
<dbReference type="PDBsum" id="7PIP"/>
<dbReference type="PDBsum" id="7PIQ"/>
<dbReference type="PDBsum" id="7PIR"/>
<dbReference type="PDBsum" id="7PIS"/>
<dbReference type="PDBsum" id="7PIT"/>
<dbReference type="PDBsum" id="8P7X"/>
<dbReference type="PDBsum" id="8P7Y"/>
<dbReference type="PDBsum" id="8P8B"/>
<dbReference type="PDBsum" id="8P8V"/>
<dbReference type="PDBsum" id="8P8W"/>
<dbReference type="EMDB" id="EMD-13234"/>
<dbReference type="EMDB" id="EMD-13272"/>
<dbReference type="EMDB" id="EMD-13273"/>
<dbReference type="EMDB" id="EMD-13274"/>
<dbReference type="EMDB" id="EMD-13275"/>
<dbReference type="EMDB" id="EMD-13276"/>
<dbReference type="EMDB" id="EMD-13277"/>
<dbReference type="EMDB" id="EMD-13278"/>
<dbReference type="EMDB" id="EMD-13279"/>
<dbReference type="EMDB" id="EMD-13280"/>
<dbReference type="EMDB" id="EMD-13281"/>
<dbReference type="EMDB" id="EMD-13282"/>
<dbReference type="EMDB" id="EMD-13285"/>
<dbReference type="EMDB" id="EMD-13286"/>
<dbReference type="EMDB" id="EMD-13410"/>
<dbReference type="EMDB" id="EMD-13411"/>
<dbReference type="EMDB" id="EMD-13412"/>
<dbReference type="EMDB" id="EMD-13413"/>
<dbReference type="EMDB" id="EMD-13432"/>
<dbReference type="EMDB" id="EMD-13433"/>
<dbReference type="EMDB" id="EMD-13434"/>
<dbReference type="EMDB" id="EMD-13435"/>
<dbReference type="EMDB" id="EMD-13436"/>
<dbReference type="EMDB" id="EMD-13445"/>
<dbReference type="EMDB" id="EMD-13446"/>
<dbReference type="EMDB" id="EMD-13447"/>
<dbReference type="EMDB" id="EMD-13448"/>
<dbReference type="EMDB" id="EMD-13449"/>
<dbReference type="EMDB" id="EMD-13450"/>
<dbReference type="SMR" id="P78026"/>
<dbReference type="STRING" id="272634.MPN_325"/>
<dbReference type="EnsemblBacteria" id="AAB96159">
    <property type="protein sequence ID" value="AAB96159"/>
    <property type="gene ID" value="MPN_325"/>
</dbReference>
<dbReference type="GeneID" id="66609019"/>
<dbReference type="KEGG" id="mpn:MPN_325"/>
<dbReference type="PATRIC" id="fig|272634.6.peg.349"/>
<dbReference type="HOGENOM" id="CLU_061463_3_1_14"/>
<dbReference type="OrthoDB" id="9813334at2"/>
<dbReference type="BioCyc" id="MPNE272634:G1GJ3-517-MONOMER"/>
<dbReference type="Proteomes" id="UP000000808">
    <property type="component" value="Chromosome"/>
</dbReference>
<dbReference type="GO" id="GO:0005737">
    <property type="term" value="C:cytoplasm"/>
    <property type="evidence" value="ECO:0007669"/>
    <property type="project" value="UniProtKB-ARBA"/>
</dbReference>
<dbReference type="GO" id="GO:1990904">
    <property type="term" value="C:ribonucleoprotein complex"/>
    <property type="evidence" value="ECO:0007669"/>
    <property type="project" value="UniProtKB-KW"/>
</dbReference>
<dbReference type="GO" id="GO:0005840">
    <property type="term" value="C:ribosome"/>
    <property type="evidence" value="ECO:0007669"/>
    <property type="project" value="UniProtKB-KW"/>
</dbReference>
<dbReference type="GO" id="GO:0019843">
    <property type="term" value="F:rRNA binding"/>
    <property type="evidence" value="ECO:0007669"/>
    <property type="project" value="UniProtKB-UniRule"/>
</dbReference>
<dbReference type="GO" id="GO:0003735">
    <property type="term" value="F:structural constituent of ribosome"/>
    <property type="evidence" value="ECO:0007669"/>
    <property type="project" value="InterPro"/>
</dbReference>
<dbReference type="GO" id="GO:0006412">
    <property type="term" value="P:translation"/>
    <property type="evidence" value="ECO:0007669"/>
    <property type="project" value="UniProtKB-UniRule"/>
</dbReference>
<dbReference type="HAMAP" id="MF_01363">
    <property type="entry name" value="Ribosomal_bL21"/>
    <property type="match status" value="1"/>
</dbReference>
<dbReference type="InterPro" id="IPR028909">
    <property type="entry name" value="bL21-like"/>
</dbReference>
<dbReference type="InterPro" id="IPR036164">
    <property type="entry name" value="bL21-like_sf"/>
</dbReference>
<dbReference type="InterPro" id="IPR001787">
    <property type="entry name" value="Ribosomal_bL21"/>
</dbReference>
<dbReference type="InterPro" id="IPR018258">
    <property type="entry name" value="Ribosomal_bL21_CS"/>
</dbReference>
<dbReference type="NCBIfam" id="TIGR00061">
    <property type="entry name" value="L21"/>
    <property type="match status" value="1"/>
</dbReference>
<dbReference type="PANTHER" id="PTHR21349">
    <property type="entry name" value="50S RIBOSOMAL PROTEIN L21"/>
    <property type="match status" value="1"/>
</dbReference>
<dbReference type="PANTHER" id="PTHR21349:SF0">
    <property type="entry name" value="LARGE RIBOSOMAL SUBUNIT PROTEIN BL21M"/>
    <property type="match status" value="1"/>
</dbReference>
<dbReference type="Pfam" id="PF00829">
    <property type="entry name" value="Ribosomal_L21p"/>
    <property type="match status" value="1"/>
</dbReference>
<dbReference type="SUPFAM" id="SSF141091">
    <property type="entry name" value="L21p-like"/>
    <property type="match status" value="1"/>
</dbReference>
<dbReference type="PROSITE" id="PS01169">
    <property type="entry name" value="RIBOSOMAL_L21"/>
    <property type="match status" value="1"/>
</dbReference>
<feature type="chain" id="PRO_0000181007" description="Large ribosomal subunit protein bL21">
    <location>
        <begin position="1"/>
        <end position="100"/>
    </location>
</feature>
<feature type="strand" evidence="3">
    <location>
        <begin position="2"/>
        <end position="7"/>
    </location>
</feature>
<feature type="strand" evidence="3">
    <location>
        <begin position="10"/>
        <end position="15"/>
    </location>
</feature>
<feature type="strand" evidence="3">
    <location>
        <begin position="19"/>
        <end position="23"/>
    </location>
</feature>
<feature type="strand" evidence="3">
    <location>
        <begin position="32"/>
        <end position="35"/>
    </location>
</feature>
<feature type="strand" evidence="3">
    <location>
        <begin position="38"/>
        <end position="41"/>
    </location>
</feature>
<feature type="strand" evidence="3">
    <location>
        <begin position="54"/>
        <end position="61"/>
    </location>
</feature>
<feature type="strand" evidence="3">
    <location>
        <begin position="68"/>
        <end position="74"/>
    </location>
</feature>
<feature type="turn" evidence="3">
    <location>
        <begin position="75"/>
        <end position="78"/>
    </location>
</feature>
<feature type="strand" evidence="3">
    <location>
        <begin position="79"/>
        <end position="85"/>
    </location>
</feature>
<feature type="strand" evidence="3">
    <location>
        <begin position="88"/>
        <end position="98"/>
    </location>
</feature>
<gene>
    <name evidence="1" type="primary">rplU</name>
    <name type="ordered locus">MPN_325</name>
    <name type="ORF">MP511</name>
</gene>